<accession>P0C379</accession>
<accession>P12135</accession>
<accession>Q6QXY7</accession>
<accession>Q6QY51</accession>
<reference key="1">
    <citation type="journal article" date="2004" name="Plant Physiol.">
        <title>A comparison of rice chloroplast genomes.</title>
        <authorList>
            <person name="Tang J."/>
            <person name="Xia H."/>
            <person name="Cao M."/>
            <person name="Zhang X."/>
            <person name="Zeng W."/>
            <person name="Hu S."/>
            <person name="Tong W."/>
            <person name="Wang J."/>
            <person name="Wang J."/>
            <person name="Yu J."/>
            <person name="Yang H."/>
            <person name="Zhu L."/>
        </authorList>
    </citation>
    <scope>NUCLEOTIDE SEQUENCE [LARGE SCALE GENOMIC DNA]</scope>
    <source>
        <strain>cv. 93-11</strain>
    </source>
</reference>
<organism>
    <name type="scientific">Oryza sativa subsp. indica</name>
    <name type="common">Rice</name>
    <dbReference type="NCBI Taxonomy" id="39946"/>
    <lineage>
        <taxon>Eukaryota</taxon>
        <taxon>Viridiplantae</taxon>
        <taxon>Streptophyta</taxon>
        <taxon>Embryophyta</taxon>
        <taxon>Tracheophyta</taxon>
        <taxon>Spermatophyta</taxon>
        <taxon>Magnoliopsida</taxon>
        <taxon>Liliopsida</taxon>
        <taxon>Poales</taxon>
        <taxon>Poaceae</taxon>
        <taxon>BOP clade</taxon>
        <taxon>Oryzoideae</taxon>
        <taxon>Oryzeae</taxon>
        <taxon>Oryzinae</taxon>
        <taxon>Oryza</taxon>
        <taxon>Oryza sativa</taxon>
    </lineage>
</organism>
<comment type="function">
    <text evidence="1">One of the essential components for the initiation of protein synthesis. Stabilizes the binding of IF-2 and IF-3 on the 30S subunit to which N-formylmethionyl-tRNA(fMet) subsequently binds. Helps modulate mRNA selection, yielding the 30S pre-initiation complex (PIC). Upon addition of the 50S ribosomal subunit IF-1, IF-2 and IF-3 are released leaving the mature 70S translation initiation complex.</text>
</comment>
<comment type="subunit">
    <text evidence="1">Component of the 30S ribosomal translation pre-initiation complex which assembles on the 30S ribosome in the order IF-2 and IF-3, IF-1 and N-formylmethionyl-tRNA(fMet); mRNA recruitment can occur at any time during PIC assembly.</text>
</comment>
<comment type="subcellular location">
    <subcellularLocation>
        <location evidence="1">Plastid</location>
        <location evidence="1">Chloroplast</location>
    </subcellularLocation>
</comment>
<comment type="similarity">
    <text evidence="1">Belongs to the IF-1 family.</text>
</comment>
<proteinExistence type="inferred from homology"/>
<gene>
    <name evidence="1" type="primary">infA</name>
    <name type="ORF">9311102</name>
</gene>
<evidence type="ECO:0000255" key="1">
    <source>
        <dbReference type="HAMAP-Rule" id="MF_00075"/>
    </source>
</evidence>
<evidence type="ECO:0000256" key="2">
    <source>
        <dbReference type="SAM" id="MobiDB-lite"/>
    </source>
</evidence>
<geneLocation type="chloroplast"/>
<keyword id="KW-0150">Chloroplast</keyword>
<keyword id="KW-0396">Initiation factor</keyword>
<keyword id="KW-0934">Plastid</keyword>
<keyword id="KW-0648">Protein biosynthesis</keyword>
<keyword id="KW-1185">Reference proteome</keyword>
<keyword id="KW-0694">RNA-binding</keyword>
<keyword id="KW-0699">rRNA-binding</keyword>
<sequence length="107" mass="12417">MTEKKNRREKKNPREAKITFEGLVMEALPNGMFRVRLENDTIILGYISGKIRSSSIRILMGDRVKIEVSRYDSSKGRIIYRLPHKDSKRTEDSKDTEDLKDTKDSKG</sequence>
<feature type="chain" id="PRO_0000289030" description="Translation initiation factor IF-1, chloroplastic">
    <location>
        <begin position="1"/>
        <end position="107"/>
    </location>
</feature>
<feature type="domain" description="S1-like" evidence="1">
    <location>
        <begin position="8"/>
        <end position="83"/>
    </location>
</feature>
<feature type="region of interest" description="Disordered" evidence="2">
    <location>
        <begin position="81"/>
        <end position="107"/>
    </location>
</feature>
<feature type="compositionally biased region" description="Basic and acidic residues" evidence="2">
    <location>
        <begin position="83"/>
        <end position="107"/>
    </location>
</feature>
<protein>
    <recommendedName>
        <fullName evidence="1">Translation initiation factor IF-1, chloroplastic</fullName>
    </recommendedName>
</protein>
<dbReference type="EMBL" id="AY522329">
    <property type="protein sequence ID" value="AAS46078.1"/>
    <property type="molecule type" value="Genomic_DNA"/>
</dbReference>
<dbReference type="RefSeq" id="YP_009161398.1">
    <property type="nucleotide sequence ID" value="NC_027678.1"/>
</dbReference>
<dbReference type="RefSeq" id="YP_654238.1">
    <property type="nucleotide sequence ID" value="NC_008155.1"/>
</dbReference>
<dbReference type="SMR" id="P0C379"/>
<dbReference type="STRING" id="39946.P0C379"/>
<dbReference type="EnsemblPlants" id="BGIOSGA034989-TA">
    <property type="protein sequence ID" value="BGIOSGA034989-PA"/>
    <property type="gene ID" value="BGIOSGA034989"/>
</dbReference>
<dbReference type="EnsemblPlants" id="BGIOSGA039614-TA">
    <property type="protein sequence ID" value="BGIOSGA039614-PA"/>
    <property type="gene ID" value="BGIOSGA039614"/>
</dbReference>
<dbReference type="EnsemblPlants" id="BGIOSGA039959-TA">
    <property type="protein sequence ID" value="BGIOSGA039959-PA"/>
    <property type="gene ID" value="BGIOSGA039959"/>
</dbReference>
<dbReference type="GeneID" id="4126928"/>
<dbReference type="Gramene" id="BGIOSGA034989-TA">
    <property type="protein sequence ID" value="BGIOSGA034989-PA"/>
    <property type="gene ID" value="BGIOSGA034989"/>
</dbReference>
<dbReference type="Gramene" id="BGIOSGA039614-TA">
    <property type="protein sequence ID" value="BGIOSGA039614-PA"/>
    <property type="gene ID" value="BGIOSGA039614"/>
</dbReference>
<dbReference type="Gramene" id="BGIOSGA039959-TA">
    <property type="protein sequence ID" value="BGIOSGA039959-PA"/>
    <property type="gene ID" value="BGIOSGA039959"/>
</dbReference>
<dbReference type="HOGENOM" id="CLU_151267_3_0_1"/>
<dbReference type="OMA" id="EGHQCLC"/>
<dbReference type="Proteomes" id="UP000007015">
    <property type="component" value="Chloroplast"/>
</dbReference>
<dbReference type="GO" id="GO:0009507">
    <property type="term" value="C:chloroplast"/>
    <property type="evidence" value="ECO:0007669"/>
    <property type="project" value="UniProtKB-SubCell"/>
</dbReference>
<dbReference type="GO" id="GO:0005829">
    <property type="term" value="C:cytosol"/>
    <property type="evidence" value="ECO:0007669"/>
    <property type="project" value="TreeGrafter"/>
</dbReference>
<dbReference type="GO" id="GO:0009536">
    <property type="term" value="C:plastid"/>
    <property type="evidence" value="ECO:0000305"/>
    <property type="project" value="Gramene"/>
</dbReference>
<dbReference type="GO" id="GO:0043022">
    <property type="term" value="F:ribosome binding"/>
    <property type="evidence" value="ECO:0007669"/>
    <property type="project" value="UniProtKB-UniRule"/>
</dbReference>
<dbReference type="GO" id="GO:0019843">
    <property type="term" value="F:rRNA binding"/>
    <property type="evidence" value="ECO:0007669"/>
    <property type="project" value="UniProtKB-UniRule"/>
</dbReference>
<dbReference type="GO" id="GO:0003743">
    <property type="term" value="F:translation initiation factor activity"/>
    <property type="evidence" value="ECO:0007669"/>
    <property type="project" value="UniProtKB-UniRule"/>
</dbReference>
<dbReference type="CDD" id="cd04451">
    <property type="entry name" value="S1_IF1"/>
    <property type="match status" value="1"/>
</dbReference>
<dbReference type="FunFam" id="2.40.50.140:FF:000019">
    <property type="entry name" value="Translation initiation factor IF-1, chloroplastic"/>
    <property type="match status" value="1"/>
</dbReference>
<dbReference type="Gene3D" id="2.40.50.140">
    <property type="entry name" value="Nucleic acid-binding proteins"/>
    <property type="match status" value="1"/>
</dbReference>
<dbReference type="HAMAP" id="MF_00075">
    <property type="entry name" value="IF_1"/>
    <property type="match status" value="1"/>
</dbReference>
<dbReference type="InterPro" id="IPR012340">
    <property type="entry name" value="NA-bd_OB-fold"/>
</dbReference>
<dbReference type="InterPro" id="IPR006196">
    <property type="entry name" value="RNA-binding_domain_S1_IF1"/>
</dbReference>
<dbReference type="InterPro" id="IPR003029">
    <property type="entry name" value="S1_domain"/>
</dbReference>
<dbReference type="InterPro" id="IPR004368">
    <property type="entry name" value="TIF_IF1"/>
</dbReference>
<dbReference type="NCBIfam" id="TIGR00008">
    <property type="entry name" value="infA"/>
    <property type="match status" value="1"/>
</dbReference>
<dbReference type="PANTHER" id="PTHR33370">
    <property type="entry name" value="TRANSLATION INITIATION FACTOR IF-1, CHLOROPLASTIC"/>
    <property type="match status" value="1"/>
</dbReference>
<dbReference type="PANTHER" id="PTHR33370:SF1">
    <property type="entry name" value="TRANSLATION INITIATION FACTOR IF-1, CHLOROPLASTIC"/>
    <property type="match status" value="1"/>
</dbReference>
<dbReference type="Pfam" id="PF01176">
    <property type="entry name" value="eIF-1a"/>
    <property type="match status" value="1"/>
</dbReference>
<dbReference type="SMART" id="SM00316">
    <property type="entry name" value="S1"/>
    <property type="match status" value="1"/>
</dbReference>
<dbReference type="SUPFAM" id="SSF50249">
    <property type="entry name" value="Nucleic acid-binding proteins"/>
    <property type="match status" value="1"/>
</dbReference>
<dbReference type="PROSITE" id="PS50832">
    <property type="entry name" value="S1_IF1_TYPE"/>
    <property type="match status" value="1"/>
</dbReference>
<name>IF1C_ORYSI</name>